<keyword id="KW-0378">Hydrolase</keyword>
<keyword id="KW-0645">Protease</keyword>
<keyword id="KW-1185">Reference proteome</keyword>
<keyword id="KW-0788">Thiol protease</keyword>
<keyword id="KW-0833">Ubl conjugation pathway</keyword>
<reference evidence="10" key="1">
    <citation type="journal article" date="2002" name="Nature">
        <title>Genome sequence of the human malaria parasite Plasmodium falciparum.</title>
        <authorList>
            <person name="Gardner M.J."/>
            <person name="Hall N."/>
            <person name="Fung E."/>
            <person name="White O."/>
            <person name="Berriman M."/>
            <person name="Hyman R.W."/>
            <person name="Carlton J.M."/>
            <person name="Pain A."/>
            <person name="Nelson K.E."/>
            <person name="Bowman S."/>
            <person name="Paulsen I.T."/>
            <person name="James K.D."/>
            <person name="Eisen J.A."/>
            <person name="Rutherford K.M."/>
            <person name="Salzberg S.L."/>
            <person name="Craig A."/>
            <person name="Kyes S."/>
            <person name="Chan M.-S."/>
            <person name="Nene V."/>
            <person name="Shallom S.J."/>
            <person name="Suh B."/>
            <person name="Peterson J."/>
            <person name="Angiuoli S."/>
            <person name="Pertea M."/>
            <person name="Allen J."/>
            <person name="Selengut J."/>
            <person name="Haft D."/>
            <person name="Mather M.W."/>
            <person name="Vaidya A.B."/>
            <person name="Martin D.M.A."/>
            <person name="Fairlamb A.H."/>
            <person name="Fraunholz M.J."/>
            <person name="Roos D.S."/>
            <person name="Ralph S.A."/>
            <person name="McFadden G.I."/>
            <person name="Cummings L.M."/>
            <person name="Subramanian G.M."/>
            <person name="Mungall C."/>
            <person name="Venter J.C."/>
            <person name="Carucci D.J."/>
            <person name="Hoffman S.L."/>
            <person name="Newbold C."/>
            <person name="Davis R.W."/>
            <person name="Fraser C.M."/>
            <person name="Barrell B.G."/>
        </authorList>
    </citation>
    <scope>NUCLEOTIDE SEQUENCE [LARGE SCALE GENOMIC DNA]</scope>
    <source>
        <strain evidence="10">3D7</strain>
    </source>
</reference>
<reference evidence="8" key="2">
    <citation type="journal article" date="2006" name="Mol. Microbiol.">
        <title>Identification by functional proteomics of a deubiquitinating/deNeddylating enzyme in Plasmodium falciparum.</title>
        <authorList>
            <person name="Artavanis-Tsakonas K."/>
            <person name="Misaghi S."/>
            <person name="Comeaux C.A."/>
            <person name="Catic A."/>
            <person name="Spooner E."/>
            <person name="Duraisingh M.T."/>
            <person name="Ploegh H.L."/>
        </authorList>
    </citation>
    <scope>FUNCTION</scope>
    <scope>CATALYTIC ACTIVITY</scope>
    <scope>DEVELOPMENTAL STAGE</scope>
    <scope>IDENTIFICATION BY MASS SPECTROMETRY</scope>
    <scope>MUTAGENESIS OF CYS-145</scope>
</reference>
<reference evidence="8" key="3">
    <citation type="journal article" date="2019" name="PLoS Pathog.">
        <title>Nedd8 hydrolysis by UCH proteases in Plasmodium parasites.</title>
        <authorList>
            <person name="Karpiyevich M."/>
            <person name="Adjalley S."/>
            <person name="Mol M."/>
            <person name="Ascher D.B."/>
            <person name="Mason B."/>
            <person name="van der Heden van Noort G.J."/>
            <person name="Laman H."/>
            <person name="Ovaa H."/>
            <person name="Lee M.C.S."/>
            <person name="Artavanis-Tsakonas K."/>
        </authorList>
    </citation>
    <scope>FUNCTION</scope>
    <scope>CATALYTIC ACTIVITY</scope>
    <scope>DEVELOPMENTAL STAGE</scope>
    <scope>IDENTIFICATION BY MASS SPECTROMETRY</scope>
    <scope>DOMAIN</scope>
    <scope>MUTAGENESIS OF ASN-18; ASP-38 AND 251-LYS--MET-295</scope>
</reference>
<protein>
    <recommendedName>
        <fullName evidence="6">Ubiquitin carboxyl-terminal hydrolase UCH54</fullName>
        <ecNumber evidence="4 5">3.4.19.12</ecNumber>
    </recommendedName>
    <alternativeName>
        <fullName evidence="7">PfUCH37</fullName>
    </alternativeName>
    <alternativeName>
        <fullName evidence="6">PfUCH54</fullName>
    </alternativeName>
</protein>
<name>UCH37_PLAF7</name>
<comment type="function">
    <text evidence="4 5">Thiol protease that recognizes and hydrolyzes a peptide bond at the C-terminal glycine of either ubiquitin or NEDD8.</text>
</comment>
<comment type="catalytic activity">
    <reaction evidence="4 5">
        <text>Thiol-dependent hydrolysis of ester, thioester, amide, peptide and isopeptide bonds formed by the C-terminal Gly of ubiquitin (a 76-residue protein attached to proteins as an intracellular targeting signal).</text>
        <dbReference type="EC" id="3.4.19.12"/>
    </reaction>
</comment>
<comment type="developmental stage">
    <text evidence="4 5">Expressed during the parasite blood stage, in schizonts (at protein level).</text>
</comment>
<comment type="domain">
    <text evidence="5">The Asn-rich domain is dispensable for deubiquitinating and deneddylating activities.</text>
</comment>
<comment type="similarity">
    <text evidence="8">Belongs to the peptidase C12 family.</text>
</comment>
<organism evidence="10">
    <name type="scientific">Plasmodium falciparum (isolate 3D7)</name>
    <dbReference type="NCBI Taxonomy" id="36329"/>
    <lineage>
        <taxon>Eukaryota</taxon>
        <taxon>Sar</taxon>
        <taxon>Alveolata</taxon>
        <taxon>Apicomplexa</taxon>
        <taxon>Aconoidasida</taxon>
        <taxon>Haemosporida</taxon>
        <taxon>Plasmodiidae</taxon>
        <taxon>Plasmodium</taxon>
        <taxon>Plasmodium (Laverania)</taxon>
    </lineage>
</organism>
<sequence>MARDNENILEEWCLIESNPCIFYDMLKRMGATEISVEDVYSLSYFDDYINNKEIINMNHILGVDTYLGENNKTLDKENNVVDVIELYKNNICMEDKYNKLLKHHSYIYGIIFLFNIGKHYKNNKYIEHNVPDNLFFAKQVIPNACATQAILSIVLNKDIELNDEIKNIKTFSLNFDSSMKGLTLSNCTFLRNIHNSYKPPIYLDKEDVHHDKKKSEDSFHFVSYISFQDKVYLLDGLQSGPVLINADEQNKPNPNNNNNNKDNDNDNNNNNNNNNNNNNNNNNNNNNNNNNNIGMNGKDWIEISREHIKKEIDEICNSQTNNDVRFNIIAVMKDKEYIIQEYINIHRIVKQRVNIKLINLGENIELSDEINEDEFPLLNDIPSIENLPNNVDTLYNIVNKSTLEINYLQSLLHEQKEIKKLWNKELTFKFFNFYPFIMSSLNLMAKHKLLKDAYQKEKLKNATKS</sequence>
<gene>
    <name evidence="6" type="primary">UCH54</name>
    <name evidence="7" type="synonym">UCH37</name>
    <name evidence="9" type="ORF">PF3D7_1117100</name>
</gene>
<dbReference type="EC" id="3.4.19.12" evidence="4 5"/>
<dbReference type="EMBL" id="LN999945">
    <property type="protein sequence ID" value="CZT98832.1"/>
    <property type="molecule type" value="Genomic_DNA"/>
</dbReference>
<dbReference type="RefSeq" id="XP_001347848.1">
    <property type="nucleotide sequence ID" value="XM_001347812.1"/>
</dbReference>
<dbReference type="SMR" id="Q8IIJ6"/>
<dbReference type="FunCoup" id="Q8IIJ6">
    <property type="interactions" value="425"/>
</dbReference>
<dbReference type="STRING" id="36329.Q8IIJ6"/>
<dbReference type="MEROPS" id="C12.A12"/>
<dbReference type="PaxDb" id="5833-PF11_0177"/>
<dbReference type="EnsemblProtists" id="CZT98832">
    <property type="protein sequence ID" value="CZT98832"/>
    <property type="gene ID" value="PF3D7_1117100"/>
</dbReference>
<dbReference type="GeneID" id="810724"/>
<dbReference type="KEGG" id="pfa:PF3D7_1117100"/>
<dbReference type="VEuPathDB" id="PlasmoDB:PF3D7_1117100"/>
<dbReference type="HOGENOM" id="CLU_018316_0_1_1"/>
<dbReference type="InParanoid" id="Q8IIJ6"/>
<dbReference type="OMA" id="XAKEKQN"/>
<dbReference type="OrthoDB" id="1924260at2759"/>
<dbReference type="PhylomeDB" id="Q8IIJ6"/>
<dbReference type="Reactome" id="R-PFA-5689603">
    <property type="pathway name" value="UCH proteinases"/>
</dbReference>
<dbReference type="Proteomes" id="UP000001450">
    <property type="component" value="Chromosome 11"/>
</dbReference>
<dbReference type="GO" id="GO:0005737">
    <property type="term" value="C:cytoplasm"/>
    <property type="evidence" value="ECO:0000318"/>
    <property type="project" value="GO_Central"/>
</dbReference>
<dbReference type="GO" id="GO:0004843">
    <property type="term" value="F:cysteine-type deubiquitinase activity"/>
    <property type="evidence" value="ECO:0000314"/>
    <property type="project" value="UniProtKB"/>
</dbReference>
<dbReference type="GO" id="GO:0019784">
    <property type="term" value="F:deNEDDylase activity"/>
    <property type="evidence" value="ECO:0000314"/>
    <property type="project" value="UniProtKB"/>
</dbReference>
<dbReference type="GO" id="GO:0000338">
    <property type="term" value="P:protein deneddylation"/>
    <property type="evidence" value="ECO:0000314"/>
    <property type="project" value="UniProtKB"/>
</dbReference>
<dbReference type="GO" id="GO:0016579">
    <property type="term" value="P:protein deubiquitination"/>
    <property type="evidence" value="ECO:0000314"/>
    <property type="project" value="UniProtKB"/>
</dbReference>
<dbReference type="GO" id="GO:0006511">
    <property type="term" value="P:ubiquitin-dependent protein catabolic process"/>
    <property type="evidence" value="ECO:0000250"/>
    <property type="project" value="GeneDB"/>
</dbReference>
<dbReference type="Gene3D" id="3.40.532.10">
    <property type="entry name" value="Peptidase C12, ubiquitin carboxyl-terminal hydrolase"/>
    <property type="match status" value="1"/>
</dbReference>
<dbReference type="InterPro" id="IPR038765">
    <property type="entry name" value="Papain-like_cys_pep_sf"/>
</dbReference>
<dbReference type="InterPro" id="IPR001578">
    <property type="entry name" value="Peptidase_C12_UCH"/>
</dbReference>
<dbReference type="InterPro" id="IPR036959">
    <property type="entry name" value="Peptidase_C12_UCH_sf"/>
</dbReference>
<dbReference type="PANTHER" id="PTHR10589">
    <property type="entry name" value="UBIQUITIN CARBOXYL-TERMINAL HYDROLASE"/>
    <property type="match status" value="1"/>
</dbReference>
<dbReference type="PANTHER" id="PTHR10589:SF16">
    <property type="entry name" value="UBIQUITIN CARBOXYL-TERMINAL HYDROLASE ISOZYME L5"/>
    <property type="match status" value="1"/>
</dbReference>
<dbReference type="Pfam" id="PF01088">
    <property type="entry name" value="Peptidase_C12"/>
    <property type="match status" value="1"/>
</dbReference>
<dbReference type="SUPFAM" id="SSF54001">
    <property type="entry name" value="Cysteine proteinases"/>
    <property type="match status" value="1"/>
</dbReference>
<dbReference type="PROSITE" id="PS52048">
    <property type="entry name" value="UCH_DOMAIN"/>
    <property type="match status" value="1"/>
</dbReference>
<dbReference type="PROSITE" id="PS52049">
    <property type="entry name" value="ULD"/>
    <property type="match status" value="1"/>
</dbReference>
<accession>Q8IIJ6</accession>
<proteinExistence type="evidence at protein level"/>
<feature type="chain" id="PRO_0000451573" description="Ubiquitin carboxyl-terminal hydrolase UCH54">
    <location>
        <begin position="1"/>
        <end position="465"/>
    </location>
</feature>
<feature type="domain" description="UCH catalytic" evidence="1">
    <location>
        <begin position="11"/>
        <end position="333"/>
    </location>
</feature>
<feature type="domain" description="ULD" evidence="2">
    <location>
        <begin position="432"/>
        <end position="460"/>
    </location>
</feature>
<feature type="region of interest" description="Disordered" evidence="3">
    <location>
        <begin position="244"/>
        <end position="293"/>
    </location>
</feature>
<feature type="compositionally biased region" description="Low complexity" evidence="3">
    <location>
        <begin position="251"/>
        <end position="292"/>
    </location>
</feature>
<feature type="active site" description="Nucleophile" evidence="1">
    <location>
        <position position="145"/>
    </location>
</feature>
<feature type="active site" description="Proton donor" evidence="1">
    <location>
        <position position="220"/>
    </location>
</feature>
<feature type="site" description="Transition state stabilizer" evidence="1">
    <location>
        <position position="139"/>
    </location>
</feature>
<feature type="site" description="Important for enzyme activity" evidence="1">
    <location>
        <position position="235"/>
    </location>
</feature>
<feature type="mutagenesis site" description="No effect on deubiquitinating and deneddylating activities; when associated with 251-K--M-295 DEL." evidence="5">
    <original>N</original>
    <variation>D</variation>
    <location>
        <position position="18"/>
    </location>
</feature>
<feature type="mutagenesis site" description="No defect in parasite growth in host erythrocytes. Severe loss of deneddylating activity with no effect on deubiquitinating activity; when associated with 251-K--M-295 DEL." evidence="5">
    <original>D</original>
    <variation>E</variation>
    <location>
        <position position="38"/>
    </location>
</feature>
<feature type="mutagenesis site" description="Complete loss of deubiquitinating and deneddylating activities." evidence="4">
    <original>C</original>
    <variation>S</variation>
    <location>
        <position position="145"/>
    </location>
</feature>
<feature type="mutagenesis site" description="No effect on deubiquitinating activity. Slight increase in deneddylating activity. Severe loss of deneddylating activity with no effect on deubiquitinating activity; when associated with E-38. No effect on deubiquitinating and deneddylating activities; when associated with D-18." evidence="5">
    <location>
        <begin position="251"/>
        <end position="295"/>
    </location>
</feature>
<evidence type="ECO:0000255" key="1">
    <source>
        <dbReference type="PROSITE-ProRule" id="PRU01393"/>
    </source>
</evidence>
<evidence type="ECO:0000255" key="2">
    <source>
        <dbReference type="PROSITE-ProRule" id="PRU01394"/>
    </source>
</evidence>
<evidence type="ECO:0000256" key="3">
    <source>
        <dbReference type="SAM" id="MobiDB-lite"/>
    </source>
</evidence>
<evidence type="ECO:0000269" key="4">
    <source>
    </source>
</evidence>
<evidence type="ECO:0000269" key="5">
    <source>
    </source>
</evidence>
<evidence type="ECO:0000303" key="6">
    <source>
    </source>
</evidence>
<evidence type="ECO:0000303" key="7">
    <source>
    </source>
</evidence>
<evidence type="ECO:0000305" key="8"/>
<evidence type="ECO:0000312" key="9">
    <source>
        <dbReference type="EMBL" id="CZT98832.1"/>
    </source>
</evidence>
<evidence type="ECO:0000312" key="10">
    <source>
        <dbReference type="Proteomes" id="UP000001450"/>
    </source>
</evidence>